<reference key="1">
    <citation type="journal article" date="2006" name="Biochem. Biophys. Res. Commun.">
        <title>ZNF569, a novel KRAB-containing zinc finger protein, suppresses MAPK signaling pathway.</title>
        <authorList>
            <person name="Huang X."/>
            <person name="Yuan W."/>
            <person name="Huang W."/>
            <person name="Bai Y."/>
            <person name="Deng Y."/>
            <person name="Zhu C."/>
            <person name="Liang P."/>
            <person name="Li Y."/>
            <person name="Du X."/>
            <person name="Liu M."/>
            <person name="Wang Y."/>
            <person name="Wu X."/>
        </authorList>
    </citation>
    <scope>NUCLEOTIDE SEQUENCE [MRNA] (ISOFORM 1)</scope>
</reference>
<reference key="2">
    <citation type="journal article" date="2004" name="Nat. Genet.">
        <title>Complete sequencing and characterization of 21,243 full-length human cDNAs.</title>
        <authorList>
            <person name="Ota T."/>
            <person name="Suzuki Y."/>
            <person name="Nishikawa T."/>
            <person name="Otsuki T."/>
            <person name="Sugiyama T."/>
            <person name="Irie R."/>
            <person name="Wakamatsu A."/>
            <person name="Hayashi K."/>
            <person name="Sato H."/>
            <person name="Nagai K."/>
            <person name="Kimura K."/>
            <person name="Makita H."/>
            <person name="Sekine M."/>
            <person name="Obayashi M."/>
            <person name="Nishi T."/>
            <person name="Shibahara T."/>
            <person name="Tanaka T."/>
            <person name="Ishii S."/>
            <person name="Yamamoto J."/>
            <person name="Saito K."/>
            <person name="Kawai Y."/>
            <person name="Isono Y."/>
            <person name="Nakamura Y."/>
            <person name="Nagahari K."/>
            <person name="Murakami K."/>
            <person name="Yasuda T."/>
            <person name="Iwayanagi T."/>
            <person name="Wagatsuma M."/>
            <person name="Shiratori A."/>
            <person name="Sudo H."/>
            <person name="Hosoiri T."/>
            <person name="Kaku Y."/>
            <person name="Kodaira H."/>
            <person name="Kondo H."/>
            <person name="Sugawara M."/>
            <person name="Takahashi M."/>
            <person name="Kanda K."/>
            <person name="Yokoi T."/>
            <person name="Furuya T."/>
            <person name="Kikkawa E."/>
            <person name="Omura Y."/>
            <person name="Abe K."/>
            <person name="Kamihara K."/>
            <person name="Katsuta N."/>
            <person name="Sato K."/>
            <person name="Tanikawa M."/>
            <person name="Yamazaki M."/>
            <person name="Ninomiya K."/>
            <person name="Ishibashi T."/>
            <person name="Yamashita H."/>
            <person name="Murakawa K."/>
            <person name="Fujimori K."/>
            <person name="Tanai H."/>
            <person name="Kimata M."/>
            <person name="Watanabe M."/>
            <person name="Hiraoka S."/>
            <person name="Chiba Y."/>
            <person name="Ishida S."/>
            <person name="Ono Y."/>
            <person name="Takiguchi S."/>
            <person name="Watanabe S."/>
            <person name="Yosida M."/>
            <person name="Hotuta T."/>
            <person name="Kusano J."/>
            <person name="Kanehori K."/>
            <person name="Takahashi-Fujii A."/>
            <person name="Hara H."/>
            <person name="Tanase T.-O."/>
            <person name="Nomura Y."/>
            <person name="Togiya S."/>
            <person name="Komai F."/>
            <person name="Hara R."/>
            <person name="Takeuchi K."/>
            <person name="Arita M."/>
            <person name="Imose N."/>
            <person name="Musashino K."/>
            <person name="Yuuki H."/>
            <person name="Oshima A."/>
            <person name="Sasaki N."/>
            <person name="Aotsuka S."/>
            <person name="Yoshikawa Y."/>
            <person name="Matsunawa H."/>
            <person name="Ichihara T."/>
            <person name="Shiohata N."/>
            <person name="Sano S."/>
            <person name="Moriya S."/>
            <person name="Momiyama H."/>
            <person name="Satoh N."/>
            <person name="Takami S."/>
            <person name="Terashima Y."/>
            <person name="Suzuki O."/>
            <person name="Nakagawa S."/>
            <person name="Senoh A."/>
            <person name="Mizoguchi H."/>
            <person name="Goto Y."/>
            <person name="Shimizu F."/>
            <person name="Wakebe H."/>
            <person name="Hishigaki H."/>
            <person name="Watanabe T."/>
            <person name="Sugiyama A."/>
            <person name="Takemoto M."/>
            <person name="Kawakami B."/>
            <person name="Yamazaki M."/>
            <person name="Watanabe K."/>
            <person name="Kumagai A."/>
            <person name="Itakura S."/>
            <person name="Fukuzumi Y."/>
            <person name="Fujimori Y."/>
            <person name="Komiyama M."/>
            <person name="Tashiro H."/>
            <person name="Tanigami A."/>
            <person name="Fujiwara T."/>
            <person name="Ono T."/>
            <person name="Yamada K."/>
            <person name="Fujii Y."/>
            <person name="Ozaki K."/>
            <person name="Hirao M."/>
            <person name="Ohmori Y."/>
            <person name="Kawabata A."/>
            <person name="Hikiji T."/>
            <person name="Kobatake N."/>
            <person name="Inagaki H."/>
            <person name="Ikema Y."/>
            <person name="Okamoto S."/>
            <person name="Okitani R."/>
            <person name="Kawakami T."/>
            <person name="Noguchi S."/>
            <person name="Itoh T."/>
            <person name="Shigeta K."/>
            <person name="Senba T."/>
            <person name="Matsumura K."/>
            <person name="Nakajima Y."/>
            <person name="Mizuno T."/>
            <person name="Morinaga M."/>
            <person name="Sasaki M."/>
            <person name="Togashi T."/>
            <person name="Oyama M."/>
            <person name="Hata H."/>
            <person name="Watanabe M."/>
            <person name="Komatsu T."/>
            <person name="Mizushima-Sugano J."/>
            <person name="Satoh T."/>
            <person name="Shirai Y."/>
            <person name="Takahashi Y."/>
            <person name="Nakagawa K."/>
            <person name="Okumura K."/>
            <person name="Nagase T."/>
            <person name="Nomura N."/>
            <person name="Kikuchi H."/>
            <person name="Masuho Y."/>
            <person name="Yamashita R."/>
            <person name="Nakai K."/>
            <person name="Yada T."/>
            <person name="Nakamura Y."/>
            <person name="Ohara O."/>
            <person name="Isogai T."/>
            <person name="Sugano S."/>
        </authorList>
    </citation>
    <scope>NUCLEOTIDE SEQUENCE [LARGE SCALE MRNA] (ISOFORM 1)</scope>
    <source>
        <tissue>Hippocampus</tissue>
        <tissue>Tongue</tissue>
    </source>
</reference>
<reference key="3">
    <citation type="journal article" date="2004" name="Nature">
        <title>The DNA sequence and biology of human chromosome 19.</title>
        <authorList>
            <person name="Grimwood J."/>
            <person name="Gordon L.A."/>
            <person name="Olsen A.S."/>
            <person name="Terry A."/>
            <person name="Schmutz J."/>
            <person name="Lamerdin J.E."/>
            <person name="Hellsten U."/>
            <person name="Goodstein D."/>
            <person name="Couronne O."/>
            <person name="Tran-Gyamfi M."/>
            <person name="Aerts A."/>
            <person name="Altherr M."/>
            <person name="Ashworth L."/>
            <person name="Bajorek E."/>
            <person name="Black S."/>
            <person name="Branscomb E."/>
            <person name="Caenepeel S."/>
            <person name="Carrano A.V."/>
            <person name="Caoile C."/>
            <person name="Chan Y.M."/>
            <person name="Christensen M."/>
            <person name="Cleland C.A."/>
            <person name="Copeland A."/>
            <person name="Dalin E."/>
            <person name="Dehal P."/>
            <person name="Denys M."/>
            <person name="Detter J.C."/>
            <person name="Escobar J."/>
            <person name="Flowers D."/>
            <person name="Fotopulos D."/>
            <person name="Garcia C."/>
            <person name="Georgescu A.M."/>
            <person name="Glavina T."/>
            <person name="Gomez M."/>
            <person name="Gonzales E."/>
            <person name="Groza M."/>
            <person name="Hammon N."/>
            <person name="Hawkins T."/>
            <person name="Haydu L."/>
            <person name="Ho I."/>
            <person name="Huang W."/>
            <person name="Israni S."/>
            <person name="Jett J."/>
            <person name="Kadner K."/>
            <person name="Kimball H."/>
            <person name="Kobayashi A."/>
            <person name="Larionov V."/>
            <person name="Leem S.-H."/>
            <person name="Lopez F."/>
            <person name="Lou Y."/>
            <person name="Lowry S."/>
            <person name="Malfatti S."/>
            <person name="Martinez D."/>
            <person name="McCready P.M."/>
            <person name="Medina C."/>
            <person name="Morgan J."/>
            <person name="Nelson K."/>
            <person name="Nolan M."/>
            <person name="Ovcharenko I."/>
            <person name="Pitluck S."/>
            <person name="Pollard M."/>
            <person name="Popkie A.P."/>
            <person name="Predki P."/>
            <person name="Quan G."/>
            <person name="Ramirez L."/>
            <person name="Rash S."/>
            <person name="Retterer J."/>
            <person name="Rodriguez A."/>
            <person name="Rogers S."/>
            <person name="Salamov A."/>
            <person name="Salazar A."/>
            <person name="She X."/>
            <person name="Smith D."/>
            <person name="Slezak T."/>
            <person name="Solovyev V."/>
            <person name="Thayer N."/>
            <person name="Tice H."/>
            <person name="Tsai M."/>
            <person name="Ustaszewska A."/>
            <person name="Vo N."/>
            <person name="Wagner M."/>
            <person name="Wheeler J."/>
            <person name="Wu K."/>
            <person name="Xie G."/>
            <person name="Yang J."/>
            <person name="Dubchak I."/>
            <person name="Furey T.S."/>
            <person name="DeJong P."/>
            <person name="Dickson M."/>
            <person name="Gordon D."/>
            <person name="Eichler E.E."/>
            <person name="Pennacchio L.A."/>
            <person name="Richardson P."/>
            <person name="Stubbs L."/>
            <person name="Rokhsar D.S."/>
            <person name="Myers R.M."/>
            <person name="Rubin E.M."/>
            <person name="Lucas S.M."/>
        </authorList>
    </citation>
    <scope>NUCLEOTIDE SEQUENCE [LARGE SCALE GENOMIC DNA]</scope>
</reference>
<reference key="4">
    <citation type="submission" date="2005-07" db="EMBL/GenBank/DDBJ databases">
        <authorList>
            <person name="Mural R.J."/>
            <person name="Istrail S."/>
            <person name="Sutton G.G."/>
            <person name="Florea L."/>
            <person name="Halpern A.L."/>
            <person name="Mobarry C.M."/>
            <person name="Lippert R."/>
            <person name="Walenz B."/>
            <person name="Shatkay H."/>
            <person name="Dew I."/>
            <person name="Miller J.R."/>
            <person name="Flanigan M.J."/>
            <person name="Edwards N.J."/>
            <person name="Bolanos R."/>
            <person name="Fasulo D."/>
            <person name="Halldorsson B.V."/>
            <person name="Hannenhalli S."/>
            <person name="Turner R."/>
            <person name="Yooseph S."/>
            <person name="Lu F."/>
            <person name="Nusskern D.R."/>
            <person name="Shue B.C."/>
            <person name="Zheng X.H."/>
            <person name="Zhong F."/>
            <person name="Delcher A.L."/>
            <person name="Huson D.H."/>
            <person name="Kravitz S.A."/>
            <person name="Mouchard L."/>
            <person name="Reinert K."/>
            <person name="Remington K.A."/>
            <person name="Clark A.G."/>
            <person name="Waterman M.S."/>
            <person name="Eichler E.E."/>
            <person name="Adams M.D."/>
            <person name="Hunkapiller M.W."/>
            <person name="Myers E.W."/>
            <person name="Venter J.C."/>
        </authorList>
    </citation>
    <scope>NUCLEOTIDE SEQUENCE [LARGE SCALE GENOMIC DNA]</scope>
</reference>
<reference key="5">
    <citation type="journal article" date="2004" name="Genome Res.">
        <title>The status, quality, and expansion of the NIH full-length cDNA project: the Mammalian Gene Collection (MGC).</title>
        <authorList>
            <consortium name="The MGC Project Team"/>
        </authorList>
    </citation>
    <scope>NUCLEOTIDE SEQUENCE [LARGE SCALE MRNA] (ISOFORM 2)</scope>
    <source>
        <tissue>Liver</tissue>
    </source>
</reference>
<reference key="6">
    <citation type="journal article" date="1992" name="Genomics">
        <title>Clustering of C2-H2 zinc finger motif sequences within telomeric and fragile site regions of human chromosomes.</title>
        <authorList>
            <person name="Lichter P."/>
            <person name="Bray P."/>
            <person name="Ried T."/>
            <person name="Dawid I.B."/>
            <person name="Ward D.C."/>
        </authorList>
    </citation>
    <scope>NUCLEOTIDE SEQUENCE [GENOMIC DNA] OF 207-263</scope>
    <source>
        <tissue>Placenta</tissue>
    </source>
</reference>
<reference key="7">
    <citation type="journal article" date="2006" name="Science">
        <title>The consensus coding sequences of human breast and colorectal cancers.</title>
        <authorList>
            <person name="Sjoeblom T."/>
            <person name="Jones S."/>
            <person name="Wood L.D."/>
            <person name="Parsons D.W."/>
            <person name="Lin J."/>
            <person name="Barber T.D."/>
            <person name="Mandelker D."/>
            <person name="Leary R.J."/>
            <person name="Ptak J."/>
            <person name="Silliman N."/>
            <person name="Szabo S."/>
            <person name="Buckhaults P."/>
            <person name="Farrell C."/>
            <person name="Meeh P."/>
            <person name="Markowitz S.D."/>
            <person name="Willis J."/>
            <person name="Dawson D."/>
            <person name="Willson J.K.V."/>
            <person name="Gazdar A.F."/>
            <person name="Hartigan J."/>
            <person name="Wu L."/>
            <person name="Liu C."/>
            <person name="Parmigiani G."/>
            <person name="Park B.H."/>
            <person name="Bachman K.E."/>
            <person name="Papadopoulos N."/>
            <person name="Vogelstein B."/>
            <person name="Kinzler K.W."/>
            <person name="Velculescu V.E."/>
        </authorList>
    </citation>
    <scope>VARIANTS [LARGE SCALE ANALYSIS] GLU-29 AND GLY-87</scope>
</reference>
<dbReference type="EMBL" id="AY835704">
    <property type="protein sequence ID" value="AAV97944.1"/>
    <property type="molecule type" value="mRNA"/>
</dbReference>
<dbReference type="EMBL" id="AK056615">
    <property type="status" value="NOT_ANNOTATED_CDS"/>
    <property type="molecule type" value="mRNA"/>
</dbReference>
<dbReference type="EMBL" id="AK289987">
    <property type="protein sequence ID" value="BAF82676.1"/>
    <property type="molecule type" value="mRNA"/>
</dbReference>
<dbReference type="EMBL" id="AC008806">
    <property type="status" value="NOT_ANNOTATED_CDS"/>
    <property type="molecule type" value="Genomic_DNA"/>
</dbReference>
<dbReference type="EMBL" id="CH471126">
    <property type="protein sequence ID" value="EAW56728.1"/>
    <property type="molecule type" value="Genomic_DNA"/>
</dbReference>
<dbReference type="EMBL" id="BC117219">
    <property type="protein sequence ID" value="AAI17220.1"/>
    <property type="molecule type" value="mRNA"/>
</dbReference>
<dbReference type="EMBL" id="M88363">
    <property type="protein sequence ID" value="AAA61321.1"/>
    <property type="molecule type" value="Genomic_DNA"/>
</dbReference>
<dbReference type="CCDS" id="CCDS12503.1">
    <molecule id="Q5MCW4-1"/>
</dbReference>
<dbReference type="CCDS" id="CCDS82341.1">
    <molecule id="Q5MCW4-2"/>
</dbReference>
<dbReference type="PIR" id="G43284">
    <property type="entry name" value="G43284"/>
</dbReference>
<dbReference type="RefSeq" id="NP_001317411.1">
    <molecule id="Q5MCW4-2"/>
    <property type="nucleotide sequence ID" value="NM_001330482.2"/>
</dbReference>
<dbReference type="RefSeq" id="NP_689697.2">
    <molecule id="Q5MCW4-1"/>
    <property type="nucleotide sequence ID" value="NM_152484.2"/>
</dbReference>
<dbReference type="RefSeq" id="XP_011524841.1">
    <molecule id="Q5MCW4-1"/>
    <property type="nucleotide sequence ID" value="XM_011526539.4"/>
</dbReference>
<dbReference type="RefSeq" id="XP_016881865.1">
    <property type="nucleotide sequence ID" value="XM_017026376.1"/>
</dbReference>
<dbReference type="RefSeq" id="XP_016881866.1">
    <property type="nucleotide sequence ID" value="XM_017026377.1"/>
</dbReference>
<dbReference type="RefSeq" id="XP_016881868.1">
    <molecule id="Q5MCW4-2"/>
    <property type="nucleotide sequence ID" value="XM_017026379.2"/>
</dbReference>
<dbReference type="RefSeq" id="XP_016881869.1">
    <property type="nucleotide sequence ID" value="XM_017026380.1"/>
</dbReference>
<dbReference type="RefSeq" id="XP_016881871.1">
    <property type="nucleotide sequence ID" value="XM_017026382.1"/>
</dbReference>
<dbReference type="RefSeq" id="XP_054175987.1">
    <molecule id="Q5MCW4-1"/>
    <property type="nucleotide sequence ID" value="XM_054320012.1"/>
</dbReference>
<dbReference type="RefSeq" id="XP_054175988.1">
    <molecule id="Q5MCW4-2"/>
    <property type="nucleotide sequence ID" value="XM_054320013.1"/>
</dbReference>
<dbReference type="SMR" id="Q5MCW4"/>
<dbReference type="BioGRID" id="127137">
    <property type="interactions" value="11"/>
</dbReference>
<dbReference type="FunCoup" id="Q5MCW4">
    <property type="interactions" value="87"/>
</dbReference>
<dbReference type="IntAct" id="Q5MCW4">
    <property type="interactions" value="7"/>
</dbReference>
<dbReference type="STRING" id="9606.ENSP00000325018"/>
<dbReference type="iPTMnet" id="Q5MCW4"/>
<dbReference type="PhosphoSitePlus" id="Q5MCW4"/>
<dbReference type="BioMuta" id="ZNF569"/>
<dbReference type="DMDM" id="74762209"/>
<dbReference type="jPOST" id="Q5MCW4"/>
<dbReference type="MassIVE" id="Q5MCW4"/>
<dbReference type="PaxDb" id="9606-ENSP00000325018"/>
<dbReference type="PeptideAtlas" id="Q5MCW4"/>
<dbReference type="ProteomicsDB" id="61164"/>
<dbReference type="ProteomicsDB" id="63573">
    <molecule id="Q5MCW4-1"/>
</dbReference>
<dbReference type="Antibodypedia" id="44797">
    <property type="antibodies" value="87 antibodies from 14 providers"/>
</dbReference>
<dbReference type="DNASU" id="148266"/>
<dbReference type="Ensembl" id="ENST00000316950.11">
    <molecule id="Q5MCW4-1"/>
    <property type="protein sequence ID" value="ENSP00000325018.5"/>
    <property type="gene ID" value="ENSG00000196437.12"/>
</dbReference>
<dbReference type="Ensembl" id="ENST00000392149.6">
    <molecule id="Q5MCW4-1"/>
    <property type="protein sequence ID" value="ENSP00000375992.2"/>
    <property type="gene ID" value="ENSG00000196437.12"/>
</dbReference>
<dbReference type="Ensembl" id="ENST00000392150.2">
    <molecule id="Q5MCW4-2"/>
    <property type="protein sequence ID" value="ENSP00000375993.2"/>
    <property type="gene ID" value="ENSG00000196437.12"/>
</dbReference>
<dbReference type="GeneID" id="148266"/>
<dbReference type="KEGG" id="hsa:148266"/>
<dbReference type="MANE-Select" id="ENST00000316950.11">
    <property type="protein sequence ID" value="ENSP00000325018.5"/>
    <property type="RefSeq nucleotide sequence ID" value="NM_152484.3"/>
    <property type="RefSeq protein sequence ID" value="NP_689697.2"/>
</dbReference>
<dbReference type="UCSC" id="uc002ogh.4">
    <molecule id="Q5MCW4-1"/>
    <property type="organism name" value="human"/>
</dbReference>
<dbReference type="AGR" id="HGNC:24737"/>
<dbReference type="CTD" id="148266"/>
<dbReference type="DisGeNET" id="148266"/>
<dbReference type="GeneCards" id="ZNF569"/>
<dbReference type="HGNC" id="HGNC:24737">
    <property type="gene designation" value="ZNF569"/>
</dbReference>
<dbReference type="HPA" id="ENSG00000196437">
    <property type="expression patterns" value="Low tissue specificity"/>
</dbReference>
<dbReference type="MIM" id="613904">
    <property type="type" value="gene"/>
</dbReference>
<dbReference type="neXtProt" id="NX_Q5MCW4"/>
<dbReference type="OpenTargets" id="ENSG00000196437"/>
<dbReference type="PharmGKB" id="PA134899564"/>
<dbReference type="VEuPathDB" id="HostDB:ENSG00000196437"/>
<dbReference type="eggNOG" id="KOG1721">
    <property type="taxonomic scope" value="Eukaryota"/>
</dbReference>
<dbReference type="GeneTree" id="ENSGT00940000154650"/>
<dbReference type="HOGENOM" id="CLU_002678_17_1_1"/>
<dbReference type="InParanoid" id="Q5MCW4"/>
<dbReference type="OMA" id="CLEHNNF"/>
<dbReference type="OrthoDB" id="9411774at2759"/>
<dbReference type="PAN-GO" id="Q5MCW4">
    <property type="GO annotations" value="4 GO annotations based on evolutionary models"/>
</dbReference>
<dbReference type="PhylomeDB" id="Q5MCW4"/>
<dbReference type="PathwayCommons" id="Q5MCW4"/>
<dbReference type="Reactome" id="R-HSA-212436">
    <property type="pathway name" value="Generic Transcription Pathway"/>
</dbReference>
<dbReference type="SignaLink" id="Q5MCW4"/>
<dbReference type="BioGRID-ORCS" id="148266">
    <property type="hits" value="20 hits in 1148 CRISPR screens"/>
</dbReference>
<dbReference type="ChiTaRS" id="ZNF569">
    <property type="organism name" value="human"/>
</dbReference>
<dbReference type="GenomeRNAi" id="148266"/>
<dbReference type="Pharos" id="Q5MCW4">
    <property type="development level" value="Tbio"/>
</dbReference>
<dbReference type="PRO" id="PR:Q5MCW4"/>
<dbReference type="Proteomes" id="UP000005640">
    <property type="component" value="Chromosome 19"/>
</dbReference>
<dbReference type="RNAct" id="Q5MCW4">
    <property type="molecule type" value="protein"/>
</dbReference>
<dbReference type="Bgee" id="ENSG00000196437">
    <property type="expression patterns" value="Expressed in primordial germ cell in gonad and 160 other cell types or tissues"/>
</dbReference>
<dbReference type="ExpressionAtlas" id="Q5MCW4">
    <property type="expression patterns" value="baseline and differential"/>
</dbReference>
<dbReference type="GO" id="GO:0005634">
    <property type="term" value="C:nucleus"/>
    <property type="evidence" value="ECO:0000318"/>
    <property type="project" value="GO_Central"/>
</dbReference>
<dbReference type="GO" id="GO:0000981">
    <property type="term" value="F:DNA-binding transcription factor activity, RNA polymerase II-specific"/>
    <property type="evidence" value="ECO:0000318"/>
    <property type="project" value="GO_Central"/>
</dbReference>
<dbReference type="GO" id="GO:0000978">
    <property type="term" value="F:RNA polymerase II cis-regulatory region sequence-specific DNA binding"/>
    <property type="evidence" value="ECO:0000318"/>
    <property type="project" value="GO_Central"/>
</dbReference>
<dbReference type="GO" id="GO:0008270">
    <property type="term" value="F:zinc ion binding"/>
    <property type="evidence" value="ECO:0007669"/>
    <property type="project" value="UniProtKB-KW"/>
</dbReference>
<dbReference type="GO" id="GO:0006357">
    <property type="term" value="P:regulation of transcription by RNA polymerase II"/>
    <property type="evidence" value="ECO:0000318"/>
    <property type="project" value="GO_Central"/>
</dbReference>
<dbReference type="CDD" id="cd07765">
    <property type="entry name" value="KRAB_A-box"/>
    <property type="match status" value="1"/>
</dbReference>
<dbReference type="FunFam" id="3.30.160.60:FF:004137">
    <property type="match status" value="1"/>
</dbReference>
<dbReference type="FunFam" id="3.30.160.60:FF:000478">
    <property type="entry name" value="Zinc finger protein 133"/>
    <property type="match status" value="2"/>
</dbReference>
<dbReference type="FunFam" id="3.30.160.60:FF:000824">
    <property type="entry name" value="Zinc finger protein 184"/>
    <property type="match status" value="1"/>
</dbReference>
<dbReference type="FunFam" id="3.30.160.60:FF:002343">
    <property type="entry name" value="Zinc finger protein 33A"/>
    <property type="match status" value="1"/>
</dbReference>
<dbReference type="FunFam" id="3.30.160.60:FF:002402">
    <property type="entry name" value="Zinc finger protein 347"/>
    <property type="match status" value="1"/>
</dbReference>
<dbReference type="FunFam" id="3.30.160.60:FF:000016">
    <property type="entry name" value="zinc finger protein 37 homolog"/>
    <property type="match status" value="3"/>
</dbReference>
<dbReference type="FunFam" id="3.30.160.60:FF:000023">
    <property type="entry name" value="zinc finger protein 37 homolog"/>
    <property type="match status" value="1"/>
</dbReference>
<dbReference type="FunFam" id="3.30.160.60:FF:002254">
    <property type="entry name" value="Zinc finger protein 540"/>
    <property type="match status" value="2"/>
</dbReference>
<dbReference type="FunFam" id="3.30.160.60:FF:000281">
    <property type="entry name" value="Zinc finger protein 558 isoform X1"/>
    <property type="match status" value="2"/>
</dbReference>
<dbReference type="FunFam" id="3.30.160.60:FF:000737">
    <property type="entry name" value="Zinc finger protein 565"/>
    <property type="match status" value="1"/>
</dbReference>
<dbReference type="FunFam" id="3.30.160.60:FF:000015">
    <property type="entry name" value="Zinc finger protein 569"/>
    <property type="match status" value="1"/>
</dbReference>
<dbReference type="FunFam" id="3.30.160.60:FF:000149">
    <property type="entry name" value="Zinc finger protein 569"/>
    <property type="match status" value="1"/>
</dbReference>
<dbReference type="FunFam" id="3.30.160.60:FF:001558">
    <property type="entry name" value="Zinc finger protein 569"/>
    <property type="match status" value="1"/>
</dbReference>
<dbReference type="FunFam" id="3.30.160.60:FF:001270">
    <property type="entry name" value="zinc finger protein 583 isoform X1"/>
    <property type="match status" value="1"/>
</dbReference>
<dbReference type="Gene3D" id="6.10.140.140">
    <property type="match status" value="1"/>
</dbReference>
<dbReference type="Gene3D" id="3.30.160.60">
    <property type="entry name" value="Classic Zinc Finger"/>
    <property type="match status" value="18"/>
</dbReference>
<dbReference type="InterPro" id="IPR001909">
    <property type="entry name" value="KRAB"/>
</dbReference>
<dbReference type="InterPro" id="IPR036051">
    <property type="entry name" value="KRAB_dom_sf"/>
</dbReference>
<dbReference type="InterPro" id="IPR036236">
    <property type="entry name" value="Znf_C2H2_sf"/>
</dbReference>
<dbReference type="InterPro" id="IPR013087">
    <property type="entry name" value="Znf_C2H2_type"/>
</dbReference>
<dbReference type="PANTHER" id="PTHR24399:SF75">
    <property type="entry name" value="ZFP14 ZINC FINGER PROTEIN-RELATED"/>
    <property type="match status" value="1"/>
</dbReference>
<dbReference type="PANTHER" id="PTHR24399">
    <property type="entry name" value="ZINC FINGER AND BTB DOMAIN-CONTAINING"/>
    <property type="match status" value="1"/>
</dbReference>
<dbReference type="Pfam" id="PF01352">
    <property type="entry name" value="KRAB"/>
    <property type="match status" value="1"/>
</dbReference>
<dbReference type="Pfam" id="PF00096">
    <property type="entry name" value="zf-C2H2"/>
    <property type="match status" value="18"/>
</dbReference>
<dbReference type="SMART" id="SM00349">
    <property type="entry name" value="KRAB"/>
    <property type="match status" value="1"/>
</dbReference>
<dbReference type="SMART" id="SM00355">
    <property type="entry name" value="ZnF_C2H2"/>
    <property type="match status" value="18"/>
</dbReference>
<dbReference type="SUPFAM" id="SSF57667">
    <property type="entry name" value="beta-beta-alpha zinc fingers"/>
    <property type="match status" value="11"/>
</dbReference>
<dbReference type="SUPFAM" id="SSF109640">
    <property type="entry name" value="KRAB domain (Kruppel-associated box)"/>
    <property type="match status" value="1"/>
</dbReference>
<dbReference type="PROSITE" id="PS50805">
    <property type="entry name" value="KRAB"/>
    <property type="match status" value="1"/>
</dbReference>
<dbReference type="PROSITE" id="PS00028">
    <property type="entry name" value="ZINC_FINGER_C2H2_1"/>
    <property type="match status" value="18"/>
</dbReference>
<dbReference type="PROSITE" id="PS50157">
    <property type="entry name" value="ZINC_FINGER_C2H2_2"/>
    <property type="match status" value="18"/>
</dbReference>
<protein>
    <recommendedName>
        <fullName>Zinc finger protein 569</fullName>
    </recommendedName>
</protein>
<organism>
    <name type="scientific">Homo sapiens</name>
    <name type="common">Human</name>
    <dbReference type="NCBI Taxonomy" id="9606"/>
    <lineage>
        <taxon>Eukaryota</taxon>
        <taxon>Metazoa</taxon>
        <taxon>Chordata</taxon>
        <taxon>Craniata</taxon>
        <taxon>Vertebrata</taxon>
        <taxon>Euteleostomi</taxon>
        <taxon>Mammalia</taxon>
        <taxon>Eutheria</taxon>
        <taxon>Euarchontoglires</taxon>
        <taxon>Primates</taxon>
        <taxon>Haplorrhini</taxon>
        <taxon>Catarrhini</taxon>
        <taxon>Hominidae</taxon>
        <taxon>Homo</taxon>
    </lineage>
</organism>
<feature type="chain" id="PRO_0000047659" description="Zinc finger protein 569">
    <location>
        <begin position="1"/>
        <end position="686"/>
    </location>
</feature>
<feature type="domain" description="KRAB" evidence="3">
    <location>
        <begin position="8"/>
        <end position="79"/>
    </location>
</feature>
<feature type="zinc finger region" description="C2H2-type 1" evidence="2">
    <location>
        <begin position="186"/>
        <end position="208"/>
    </location>
</feature>
<feature type="zinc finger region" description="C2H2-type 2" evidence="2">
    <location>
        <begin position="214"/>
        <end position="236"/>
    </location>
</feature>
<feature type="zinc finger region" description="C2H2-type 3" evidence="2">
    <location>
        <begin position="242"/>
        <end position="264"/>
    </location>
</feature>
<feature type="zinc finger region" description="C2H2-type 4" evidence="2">
    <location>
        <begin position="270"/>
        <end position="292"/>
    </location>
</feature>
<feature type="zinc finger region" description="C2H2-type 5" evidence="2">
    <location>
        <begin position="298"/>
        <end position="320"/>
    </location>
</feature>
<feature type="zinc finger region" description="C2H2-type 6" evidence="2">
    <location>
        <begin position="326"/>
        <end position="348"/>
    </location>
</feature>
<feature type="zinc finger region" description="C2H2-type 7" evidence="2">
    <location>
        <begin position="354"/>
        <end position="376"/>
    </location>
</feature>
<feature type="zinc finger region" description="C2H2-type 8" evidence="2">
    <location>
        <begin position="382"/>
        <end position="404"/>
    </location>
</feature>
<feature type="zinc finger region" description="C2H2-type 9" evidence="2">
    <location>
        <begin position="410"/>
        <end position="432"/>
    </location>
</feature>
<feature type="zinc finger region" description="C2H2-type 10" evidence="2">
    <location>
        <begin position="438"/>
        <end position="460"/>
    </location>
</feature>
<feature type="zinc finger region" description="C2H2-type 11" evidence="2">
    <location>
        <begin position="466"/>
        <end position="488"/>
    </location>
</feature>
<feature type="zinc finger region" description="C2H2-type 12" evidence="2">
    <location>
        <begin position="494"/>
        <end position="516"/>
    </location>
</feature>
<feature type="zinc finger region" description="C2H2-type 13" evidence="2">
    <location>
        <begin position="522"/>
        <end position="544"/>
    </location>
</feature>
<feature type="zinc finger region" description="C2H2-type 14" evidence="2">
    <location>
        <begin position="550"/>
        <end position="572"/>
    </location>
</feature>
<feature type="zinc finger region" description="C2H2-type 15" evidence="2">
    <location>
        <begin position="578"/>
        <end position="600"/>
    </location>
</feature>
<feature type="zinc finger region" description="C2H2-type 16" evidence="2">
    <location>
        <begin position="606"/>
        <end position="628"/>
    </location>
</feature>
<feature type="zinc finger region" description="C2H2-type 17" evidence="2">
    <location>
        <begin position="634"/>
        <end position="656"/>
    </location>
</feature>
<feature type="zinc finger region" description="C2H2-type 18" evidence="2">
    <location>
        <begin position="662"/>
        <end position="684"/>
    </location>
</feature>
<feature type="splice variant" id="VSP_055966" description="In isoform 2." evidence="5">
    <location>
        <begin position="1"/>
        <end position="159"/>
    </location>
</feature>
<feature type="sequence variant" id="VAR_035589" description="In a breast cancer sample; somatic mutation." evidence="4">
    <original>Q</original>
    <variation>E</variation>
    <location>
        <position position="29"/>
    </location>
</feature>
<feature type="sequence variant" id="VAR_035590" description="In a breast cancer sample; somatic mutation; dbSNP:rs1349967796." evidence="4">
    <original>E</original>
    <variation>G</variation>
    <location>
        <position position="87"/>
    </location>
</feature>
<feature type="sequence conflict" description="In Ref. 2; AK056615." evidence="6" ref="2">
    <original>R</original>
    <variation>G</variation>
    <location>
        <position position="598"/>
    </location>
</feature>
<gene>
    <name type="primary">ZNF569</name>
</gene>
<sequence>MTESQGTVTFKDVAIDFTQEEWKRLDPAQRKLYRNVMLENYNNLITVGYPFTKPDVIFKLEQEEEPWVMEEEVLRRHWQGEIWGVDEHQKNQDRLLRQVEVKFQKTLTEEKGNECQKKFANVFPLNSDFFPSRHNLYEYDLFGKCLEHNFDCHNNVKCLMRKEHCEYNEPVKSYGNSSSHFVITPFKCNHCGKGFNQTLDLIRHLRIHTGEKPYECSNCRKAFSHKEKLIKHYKIHSREQSYKCNECGKAFIKMSNLIRHQRIHTGEKPYACKECEKSFSQKSNLIDHEKIHTGEKPYECNECGKAFSQKQSLIAHQKVHTGEKPYACNECGKAFPRIASLALHMRSHTGEKPYKCDKCGKAFSQFSMLIIHVRIHTGEKPYECNECGKAFSQSSALTVHMRSHTGEKPYECKECRKAFSHKKNFITHQKIHTREKPYECNECGKAFIQMSNLVRHQRIHTGEKPYICKECGKAFSQKSNLIAHEKIHSGEKPYECNECGKAFSQKQNFITHQKVHTGEKPYDCNECGKAFSQIASLTLHLRSHTGEKPYECDKCGKAFSQCSLLNLHMRSHTGEKPYVCNECGKAFSQRTSLIVHMRGHTGEKPYECNKCGKAFSQSSSLTIHIRGHTGEKPFDCSKCGKAFSQISSLTLHMRKHTGEKPYHCIECGKAFSQKSHLVRHQRIHTH</sequence>
<keyword id="KW-0025">Alternative splicing</keyword>
<keyword id="KW-0238">DNA-binding</keyword>
<keyword id="KW-0479">Metal-binding</keyword>
<keyword id="KW-0539">Nucleus</keyword>
<keyword id="KW-1267">Proteomics identification</keyword>
<keyword id="KW-1185">Reference proteome</keyword>
<keyword id="KW-0677">Repeat</keyword>
<keyword id="KW-0804">Transcription</keyword>
<keyword id="KW-0805">Transcription regulation</keyword>
<keyword id="KW-0862">Zinc</keyword>
<keyword id="KW-0863">Zinc-finger</keyword>
<proteinExistence type="evidence at protein level"/>
<comment type="function">
    <text evidence="1">May be involved in transcriptional regulation.</text>
</comment>
<comment type="interaction">
    <interactant intactId="EBI-4395687">
        <id>Q5MCW4</id>
    </interactant>
    <interactant intactId="EBI-948001">
        <id>Q15323</id>
        <label>KRT31</label>
    </interactant>
    <organismsDiffer>false</organismsDiffer>
    <experiments>6</experiments>
</comment>
<comment type="interaction">
    <interactant intactId="EBI-4395687">
        <id>Q5MCW4</id>
    </interactant>
    <interactant intactId="EBI-10171697">
        <id>Q6A162</id>
        <label>KRT40</label>
    </interactant>
    <organismsDiffer>false</organismsDiffer>
    <experiments>3</experiments>
</comment>
<comment type="interaction">
    <interactant intactId="EBI-4395687">
        <id>Q5MCW4</id>
    </interactant>
    <interactant intactId="EBI-12001016">
        <id>P07101-3</id>
        <label>TH</label>
    </interactant>
    <organismsDiffer>false</organismsDiffer>
    <experiments>3</experiments>
</comment>
<comment type="subcellular location">
    <subcellularLocation>
        <location evidence="1">Nucleus</location>
    </subcellularLocation>
</comment>
<comment type="alternative products">
    <event type="alternative splicing"/>
    <isoform>
        <id>Q5MCW4-1</id>
        <name>1</name>
        <sequence type="displayed"/>
    </isoform>
    <isoform>
        <id>Q5MCW4-2</id>
        <name>2</name>
        <sequence type="described" ref="VSP_055966"/>
    </isoform>
</comment>
<comment type="similarity">
    <text evidence="6">Belongs to the krueppel C2H2-type zinc-finger protein family.</text>
</comment>
<comment type="sequence caution" evidence="6">
    <conflict type="erroneous termination">
        <sequence resource="EMBL" id="AK056615"/>
    </conflict>
    <text>Truncated C-terminus.</text>
</comment>
<evidence type="ECO:0000250" key="1"/>
<evidence type="ECO:0000255" key="2">
    <source>
        <dbReference type="PROSITE-ProRule" id="PRU00042"/>
    </source>
</evidence>
<evidence type="ECO:0000255" key="3">
    <source>
        <dbReference type="PROSITE-ProRule" id="PRU00119"/>
    </source>
</evidence>
<evidence type="ECO:0000269" key="4">
    <source>
    </source>
</evidence>
<evidence type="ECO:0000303" key="5">
    <source>
    </source>
</evidence>
<evidence type="ECO:0000305" key="6"/>
<name>ZN569_HUMAN</name>
<accession>Q5MCW4</accession>
<accession>A8K1S2</accession>
<accession>Q15925</accession>
<accession>Q17RR6</accession>
<accession>Q96MQ2</accession>